<sequence length="366" mass="41914">MTPEHLPTEQYEAQLAEKVVRLQSMMAPFSDLVPEVFRSPVSHYRMRAEFRIWHDGDDLYHIIFDQQTKSRIRVDSFPAASELINQLMTAMIAGVRNNPVLRHKLFQIDYLTTLSNQAVVSLLYHKKLDDEWRQEAEALRDALRAQNLNVHLIGRATKTKIELDQDYIDERLPVAGKEMIYRQVENSFTQPNAAMNIQMLEWALDVTKGSKGDLLELYCGNGNFSLALARNFDRVLATEIAKPSVAAAQYNIAANHIDNVQIIRMAAEEFTQAMNGVREFNRLQGIDLKSYQCETIFVDPPRSGLDSETEKMVQAYPCILYISCNPETLCKNLETLSQTHKVERLALFDQFPYTHHMECGVLLTAK</sequence>
<name>TRMA_SHISS</name>
<reference key="1">
    <citation type="journal article" date="2005" name="Nucleic Acids Res.">
        <title>Genome dynamics and diversity of Shigella species, the etiologic agents of bacillary dysentery.</title>
        <authorList>
            <person name="Yang F."/>
            <person name="Yang J."/>
            <person name="Zhang X."/>
            <person name="Chen L."/>
            <person name="Jiang Y."/>
            <person name="Yan Y."/>
            <person name="Tang X."/>
            <person name="Wang J."/>
            <person name="Xiong Z."/>
            <person name="Dong J."/>
            <person name="Xue Y."/>
            <person name="Zhu Y."/>
            <person name="Xu X."/>
            <person name="Sun L."/>
            <person name="Chen S."/>
            <person name="Nie H."/>
            <person name="Peng J."/>
            <person name="Xu J."/>
            <person name="Wang Y."/>
            <person name="Yuan Z."/>
            <person name="Wen Y."/>
            <person name="Yao Z."/>
            <person name="Shen Y."/>
            <person name="Qiang B."/>
            <person name="Hou Y."/>
            <person name="Yu J."/>
            <person name="Jin Q."/>
        </authorList>
    </citation>
    <scope>NUCLEOTIDE SEQUENCE [LARGE SCALE GENOMIC DNA]</scope>
    <source>
        <strain>Ss046</strain>
    </source>
</reference>
<dbReference type="EC" id="2.1.1.-" evidence="1"/>
<dbReference type="EC" id="2.1.1.35" evidence="1"/>
<dbReference type="EMBL" id="CP000038">
    <property type="protein sequence ID" value="AAZ90651.1"/>
    <property type="molecule type" value="Genomic_DNA"/>
</dbReference>
<dbReference type="RefSeq" id="WP_000187019.1">
    <property type="nucleotide sequence ID" value="NC_007384.1"/>
</dbReference>
<dbReference type="SMR" id="Q3YV11"/>
<dbReference type="GeneID" id="93777928"/>
<dbReference type="KEGG" id="ssn:SSON_4138"/>
<dbReference type="HOGENOM" id="CLU_043022_0_0_6"/>
<dbReference type="Proteomes" id="UP000002529">
    <property type="component" value="Chromosome"/>
</dbReference>
<dbReference type="GO" id="GO:0005829">
    <property type="term" value="C:cytosol"/>
    <property type="evidence" value="ECO:0007669"/>
    <property type="project" value="TreeGrafter"/>
</dbReference>
<dbReference type="GO" id="GO:0019843">
    <property type="term" value="F:rRNA binding"/>
    <property type="evidence" value="ECO:0007669"/>
    <property type="project" value="TreeGrafter"/>
</dbReference>
<dbReference type="GO" id="GO:0030697">
    <property type="term" value="F:tRNA (uracil(54)-C5)-methyltransferase activity, S-adenosyl methionine-dependent"/>
    <property type="evidence" value="ECO:0007669"/>
    <property type="project" value="UniProtKB-UniRule"/>
</dbReference>
<dbReference type="GO" id="GO:0000049">
    <property type="term" value="F:tRNA binding"/>
    <property type="evidence" value="ECO:0007669"/>
    <property type="project" value="TreeGrafter"/>
</dbReference>
<dbReference type="GO" id="GO:0030488">
    <property type="term" value="P:tRNA methylation"/>
    <property type="evidence" value="ECO:0007669"/>
    <property type="project" value="UniProtKB-UniRule"/>
</dbReference>
<dbReference type="CDD" id="cd02440">
    <property type="entry name" value="AdoMet_MTases"/>
    <property type="match status" value="1"/>
</dbReference>
<dbReference type="FunFam" id="2.40.50.1070:FF:000001">
    <property type="entry name" value="tRNA/tmRNA (uracil-C(5))-methyltransferase"/>
    <property type="match status" value="1"/>
</dbReference>
<dbReference type="FunFam" id="3.40.50.150:FF:000012">
    <property type="entry name" value="tRNA/tmRNA (uracil-C(5))-methyltransferase"/>
    <property type="match status" value="1"/>
</dbReference>
<dbReference type="Gene3D" id="2.40.50.1070">
    <property type="match status" value="1"/>
</dbReference>
<dbReference type="Gene3D" id="3.40.50.150">
    <property type="entry name" value="Vaccinia Virus protein VP39"/>
    <property type="match status" value="1"/>
</dbReference>
<dbReference type="HAMAP" id="MF_01011">
    <property type="entry name" value="RNA_methyltr_TrmA"/>
    <property type="match status" value="1"/>
</dbReference>
<dbReference type="InterPro" id="IPR030390">
    <property type="entry name" value="MeTrfase_TrmA_AS"/>
</dbReference>
<dbReference type="InterPro" id="IPR030391">
    <property type="entry name" value="MeTrfase_TrmA_CS"/>
</dbReference>
<dbReference type="InterPro" id="IPR029063">
    <property type="entry name" value="SAM-dependent_MTases_sf"/>
</dbReference>
<dbReference type="InterPro" id="IPR011869">
    <property type="entry name" value="TrmA_MeTrfase"/>
</dbReference>
<dbReference type="InterPro" id="IPR010280">
    <property type="entry name" value="U5_MeTrfase_fam"/>
</dbReference>
<dbReference type="NCBIfam" id="TIGR02143">
    <property type="entry name" value="trmA_only"/>
    <property type="match status" value="1"/>
</dbReference>
<dbReference type="PANTHER" id="PTHR47790">
    <property type="entry name" value="TRNA/TMRNA (URACIL-C(5))-METHYLTRANSFERASE"/>
    <property type="match status" value="1"/>
</dbReference>
<dbReference type="PANTHER" id="PTHR47790:SF2">
    <property type="entry name" value="TRNA_TMRNA (URACIL-C(5))-METHYLTRANSFERASE"/>
    <property type="match status" value="1"/>
</dbReference>
<dbReference type="Pfam" id="PF05958">
    <property type="entry name" value="tRNA_U5-meth_tr"/>
    <property type="match status" value="1"/>
</dbReference>
<dbReference type="SUPFAM" id="SSF53335">
    <property type="entry name" value="S-adenosyl-L-methionine-dependent methyltransferases"/>
    <property type="match status" value="1"/>
</dbReference>
<dbReference type="PROSITE" id="PS51687">
    <property type="entry name" value="SAM_MT_RNA_M5U"/>
    <property type="match status" value="1"/>
</dbReference>
<dbReference type="PROSITE" id="PS01230">
    <property type="entry name" value="TRMA_1"/>
    <property type="match status" value="1"/>
</dbReference>
<dbReference type="PROSITE" id="PS01231">
    <property type="entry name" value="TRMA_2"/>
    <property type="match status" value="1"/>
</dbReference>
<comment type="function">
    <text evidence="1">Dual-specificity methyltransferase that catalyzes the formation of 5-methyluridine at position 54 (m5U54) in all tRNAs, and that of position 341 (m5U341) in tmRNA (transfer-mRNA).</text>
</comment>
<comment type="catalytic activity">
    <reaction evidence="1">
        <text>uridine(54) in tRNA + S-adenosyl-L-methionine = 5-methyluridine(54) in tRNA + S-adenosyl-L-homocysteine + H(+)</text>
        <dbReference type="Rhea" id="RHEA:42712"/>
        <dbReference type="Rhea" id="RHEA-COMP:10167"/>
        <dbReference type="Rhea" id="RHEA-COMP:10193"/>
        <dbReference type="ChEBI" id="CHEBI:15378"/>
        <dbReference type="ChEBI" id="CHEBI:57856"/>
        <dbReference type="ChEBI" id="CHEBI:59789"/>
        <dbReference type="ChEBI" id="CHEBI:65315"/>
        <dbReference type="ChEBI" id="CHEBI:74447"/>
        <dbReference type="EC" id="2.1.1.35"/>
    </reaction>
</comment>
<comment type="catalytic activity">
    <reaction evidence="1">
        <text>uridine(341) in tmRNA + S-adenosyl-L-methionine = 5-methyluridine(341) in tmRNA + S-adenosyl-L-homocysteine + H(+)</text>
        <dbReference type="Rhea" id="RHEA:43612"/>
        <dbReference type="Rhea" id="RHEA-COMP:10630"/>
        <dbReference type="Rhea" id="RHEA-COMP:10631"/>
        <dbReference type="ChEBI" id="CHEBI:15378"/>
        <dbReference type="ChEBI" id="CHEBI:57856"/>
        <dbReference type="ChEBI" id="CHEBI:59789"/>
        <dbReference type="ChEBI" id="CHEBI:65315"/>
        <dbReference type="ChEBI" id="CHEBI:74447"/>
    </reaction>
</comment>
<comment type="similarity">
    <text evidence="1">Belongs to the class I-like SAM-binding methyltransferase superfamily. RNA M5U methyltransferase family. TrmA subfamily.</text>
</comment>
<protein>
    <recommendedName>
        <fullName evidence="1">tRNA/tmRNA (uracil-C(5))-methyltransferase</fullName>
        <ecNumber evidence="1">2.1.1.-</ecNumber>
        <ecNumber evidence="1">2.1.1.35</ecNumber>
    </recommendedName>
    <alternativeName>
        <fullName evidence="1">tRNA (uracil(54)-C(5))-methyltransferase</fullName>
    </alternativeName>
    <alternativeName>
        <fullName evidence="1">tRNA(m5U54)-methyltransferase</fullName>
        <shortName evidence="1">RUMT</shortName>
    </alternativeName>
    <alternativeName>
        <fullName evidence="1">tmRNA (uracil(341)-C(5))-methyltransferase</fullName>
    </alternativeName>
</protein>
<keyword id="KW-0489">Methyltransferase</keyword>
<keyword id="KW-1185">Reference proteome</keyword>
<keyword id="KW-0949">S-adenosyl-L-methionine</keyword>
<keyword id="KW-0808">Transferase</keyword>
<keyword id="KW-0819">tRNA processing</keyword>
<accession>Q3YV11</accession>
<organism>
    <name type="scientific">Shigella sonnei (strain Ss046)</name>
    <dbReference type="NCBI Taxonomy" id="300269"/>
    <lineage>
        <taxon>Bacteria</taxon>
        <taxon>Pseudomonadati</taxon>
        <taxon>Pseudomonadota</taxon>
        <taxon>Gammaproteobacteria</taxon>
        <taxon>Enterobacterales</taxon>
        <taxon>Enterobacteriaceae</taxon>
        <taxon>Shigella</taxon>
    </lineage>
</organism>
<gene>
    <name evidence="1" type="primary">trmA</name>
    <name type="ordered locus">SSON_4138</name>
</gene>
<evidence type="ECO:0000255" key="1">
    <source>
        <dbReference type="HAMAP-Rule" id="MF_01011"/>
    </source>
</evidence>
<proteinExistence type="inferred from homology"/>
<feature type="chain" id="PRO_0000281467" description="tRNA/tmRNA (uracil-C(5))-methyltransferase">
    <location>
        <begin position="1"/>
        <end position="366"/>
    </location>
</feature>
<feature type="active site" description="Nucleophile" evidence="1">
    <location>
        <position position="324"/>
    </location>
</feature>
<feature type="active site" description="Proton acceptor" evidence="1">
    <location>
        <position position="358"/>
    </location>
</feature>
<feature type="binding site" evidence="1">
    <location>
        <position position="190"/>
    </location>
    <ligand>
        <name>S-adenosyl-L-methionine</name>
        <dbReference type="ChEBI" id="CHEBI:59789"/>
    </ligand>
</feature>
<feature type="binding site" evidence="1">
    <location>
        <position position="218"/>
    </location>
    <ligand>
        <name>S-adenosyl-L-methionine</name>
        <dbReference type="ChEBI" id="CHEBI:59789"/>
    </ligand>
</feature>
<feature type="binding site" evidence="1">
    <location>
        <position position="223"/>
    </location>
    <ligand>
        <name>S-adenosyl-L-methionine</name>
        <dbReference type="ChEBI" id="CHEBI:59789"/>
    </ligand>
</feature>
<feature type="binding site" evidence="1">
    <location>
        <position position="239"/>
    </location>
    <ligand>
        <name>S-adenosyl-L-methionine</name>
        <dbReference type="ChEBI" id="CHEBI:59789"/>
    </ligand>
</feature>
<feature type="binding site" evidence="1">
    <location>
        <position position="299"/>
    </location>
    <ligand>
        <name>S-adenosyl-L-methionine</name>
        <dbReference type="ChEBI" id="CHEBI:59789"/>
    </ligand>
</feature>